<name>ACPS_BURP6</name>
<reference key="1">
    <citation type="journal article" date="2010" name="Genome Biol. Evol.">
        <title>Continuing evolution of Burkholderia mallei through genome reduction and large-scale rearrangements.</title>
        <authorList>
            <person name="Losada L."/>
            <person name="Ronning C.M."/>
            <person name="DeShazer D."/>
            <person name="Woods D."/>
            <person name="Fedorova N."/>
            <person name="Kim H.S."/>
            <person name="Shabalina S.A."/>
            <person name="Pearson T.R."/>
            <person name="Brinkac L."/>
            <person name="Tan P."/>
            <person name="Nandi T."/>
            <person name="Crabtree J."/>
            <person name="Badger J."/>
            <person name="Beckstrom-Sternberg S."/>
            <person name="Saqib M."/>
            <person name="Schutzer S.E."/>
            <person name="Keim P."/>
            <person name="Nierman W.C."/>
        </authorList>
    </citation>
    <scope>NUCLEOTIDE SEQUENCE [LARGE SCALE GENOMIC DNA]</scope>
    <source>
        <strain>668</strain>
    </source>
</reference>
<accession>A3NBS5</accession>
<organism>
    <name type="scientific">Burkholderia pseudomallei (strain 668)</name>
    <dbReference type="NCBI Taxonomy" id="320373"/>
    <lineage>
        <taxon>Bacteria</taxon>
        <taxon>Pseudomonadati</taxon>
        <taxon>Pseudomonadota</taxon>
        <taxon>Betaproteobacteria</taxon>
        <taxon>Burkholderiales</taxon>
        <taxon>Burkholderiaceae</taxon>
        <taxon>Burkholderia</taxon>
        <taxon>pseudomallei group</taxon>
    </lineage>
</organism>
<evidence type="ECO:0000255" key="1">
    <source>
        <dbReference type="HAMAP-Rule" id="MF_00101"/>
    </source>
</evidence>
<proteinExistence type="inferred from homology"/>
<gene>
    <name evidence="1" type="primary">acpS</name>
    <name type="ordered locus">BURPS668_2775</name>
</gene>
<sequence>MAIYGIGTDLAQVSRIAAVLERTGGRFAEKVLGPDELRVFHARRARSEARGIAFLATRFSAKEAFSKAIGLGMHWPMTWRALQTLNRPSGEPYVIASGELAAWLDARGITARVTVSDERDYAVTFVVAEAPDDVAAARSGAAS</sequence>
<keyword id="KW-0963">Cytoplasm</keyword>
<keyword id="KW-0275">Fatty acid biosynthesis</keyword>
<keyword id="KW-0276">Fatty acid metabolism</keyword>
<keyword id="KW-0444">Lipid biosynthesis</keyword>
<keyword id="KW-0443">Lipid metabolism</keyword>
<keyword id="KW-0460">Magnesium</keyword>
<keyword id="KW-0479">Metal-binding</keyword>
<keyword id="KW-0808">Transferase</keyword>
<feature type="chain" id="PRO_1000008401" description="Holo-[acyl-carrier-protein] synthase">
    <location>
        <begin position="1"/>
        <end position="143"/>
    </location>
</feature>
<feature type="binding site" evidence="1">
    <location>
        <position position="9"/>
    </location>
    <ligand>
        <name>Mg(2+)</name>
        <dbReference type="ChEBI" id="CHEBI:18420"/>
    </ligand>
</feature>
<feature type="binding site" evidence="1">
    <location>
        <position position="63"/>
    </location>
    <ligand>
        <name>Mg(2+)</name>
        <dbReference type="ChEBI" id="CHEBI:18420"/>
    </ligand>
</feature>
<protein>
    <recommendedName>
        <fullName evidence="1">Holo-[acyl-carrier-protein] synthase</fullName>
        <shortName evidence="1">Holo-ACP synthase</shortName>
        <ecNumber evidence="1">2.7.8.7</ecNumber>
    </recommendedName>
    <alternativeName>
        <fullName evidence="1">4'-phosphopantetheinyl transferase AcpS</fullName>
    </alternativeName>
</protein>
<dbReference type="EC" id="2.7.8.7" evidence="1"/>
<dbReference type="EMBL" id="CP000570">
    <property type="protein sequence ID" value="ABN81640.1"/>
    <property type="molecule type" value="Genomic_DNA"/>
</dbReference>
<dbReference type="RefSeq" id="WP_011851958.1">
    <property type="nucleotide sequence ID" value="NC_009074.1"/>
</dbReference>
<dbReference type="SMR" id="A3NBS5"/>
<dbReference type="KEGG" id="bpd:BURPS668_2775"/>
<dbReference type="HOGENOM" id="CLU_089696_3_1_4"/>
<dbReference type="GO" id="GO:0005737">
    <property type="term" value="C:cytoplasm"/>
    <property type="evidence" value="ECO:0007669"/>
    <property type="project" value="UniProtKB-SubCell"/>
</dbReference>
<dbReference type="GO" id="GO:0008897">
    <property type="term" value="F:holo-[acyl-carrier-protein] synthase activity"/>
    <property type="evidence" value="ECO:0007669"/>
    <property type="project" value="UniProtKB-UniRule"/>
</dbReference>
<dbReference type="GO" id="GO:0000287">
    <property type="term" value="F:magnesium ion binding"/>
    <property type="evidence" value="ECO:0007669"/>
    <property type="project" value="UniProtKB-UniRule"/>
</dbReference>
<dbReference type="GO" id="GO:0006633">
    <property type="term" value="P:fatty acid biosynthetic process"/>
    <property type="evidence" value="ECO:0007669"/>
    <property type="project" value="UniProtKB-UniRule"/>
</dbReference>
<dbReference type="Gene3D" id="3.90.470.20">
    <property type="entry name" value="4'-phosphopantetheinyl transferase domain"/>
    <property type="match status" value="1"/>
</dbReference>
<dbReference type="HAMAP" id="MF_00101">
    <property type="entry name" value="AcpS"/>
    <property type="match status" value="1"/>
</dbReference>
<dbReference type="InterPro" id="IPR008278">
    <property type="entry name" value="4-PPantetheinyl_Trfase_dom"/>
</dbReference>
<dbReference type="InterPro" id="IPR037143">
    <property type="entry name" value="4-PPantetheinyl_Trfase_dom_sf"/>
</dbReference>
<dbReference type="InterPro" id="IPR002582">
    <property type="entry name" value="ACPS"/>
</dbReference>
<dbReference type="InterPro" id="IPR004568">
    <property type="entry name" value="Ppantetheine-prot_Trfase_dom"/>
</dbReference>
<dbReference type="NCBIfam" id="TIGR00516">
    <property type="entry name" value="acpS"/>
    <property type="match status" value="1"/>
</dbReference>
<dbReference type="NCBIfam" id="TIGR00556">
    <property type="entry name" value="pantethn_trn"/>
    <property type="match status" value="1"/>
</dbReference>
<dbReference type="Pfam" id="PF01648">
    <property type="entry name" value="ACPS"/>
    <property type="match status" value="1"/>
</dbReference>
<dbReference type="SUPFAM" id="SSF56214">
    <property type="entry name" value="4'-phosphopantetheinyl transferase"/>
    <property type="match status" value="1"/>
</dbReference>
<comment type="function">
    <text evidence="1">Transfers the 4'-phosphopantetheine moiety from coenzyme A to a Ser of acyl-carrier-protein.</text>
</comment>
<comment type="catalytic activity">
    <reaction evidence="1">
        <text>apo-[ACP] + CoA = holo-[ACP] + adenosine 3',5'-bisphosphate + H(+)</text>
        <dbReference type="Rhea" id="RHEA:12068"/>
        <dbReference type="Rhea" id="RHEA-COMP:9685"/>
        <dbReference type="Rhea" id="RHEA-COMP:9690"/>
        <dbReference type="ChEBI" id="CHEBI:15378"/>
        <dbReference type="ChEBI" id="CHEBI:29999"/>
        <dbReference type="ChEBI" id="CHEBI:57287"/>
        <dbReference type="ChEBI" id="CHEBI:58343"/>
        <dbReference type="ChEBI" id="CHEBI:64479"/>
        <dbReference type="EC" id="2.7.8.7"/>
    </reaction>
</comment>
<comment type="cofactor">
    <cofactor evidence="1">
        <name>Mg(2+)</name>
        <dbReference type="ChEBI" id="CHEBI:18420"/>
    </cofactor>
</comment>
<comment type="subcellular location">
    <subcellularLocation>
        <location evidence="1">Cytoplasm</location>
    </subcellularLocation>
</comment>
<comment type="similarity">
    <text evidence="1">Belongs to the P-Pant transferase superfamily. AcpS family.</text>
</comment>